<accession>P06829</accession>
<organismHost>
    <name type="scientific">Cavia cutleri</name>
    <name type="common">Guinea pig</name>
    <dbReference type="NCBI Taxonomy" id="10144"/>
</organismHost>
<organismHost>
    <name type="scientific">Cricetidae sp.</name>
    <name type="common">Hamster</name>
    <dbReference type="NCBI Taxonomy" id="36483"/>
</organismHost>
<organismHost>
    <name type="scientific">Mus musculus</name>
    <name type="common">Mouse</name>
    <dbReference type="NCBI Taxonomy" id="10090"/>
</organismHost>
<organismHost>
    <name type="scientific">Rattus norvegicus</name>
    <name type="common">Rat</name>
    <dbReference type="NCBI Taxonomy" id="10116"/>
</organismHost>
<proteinExistence type="inferred from homology"/>
<keyword id="KW-0067">ATP-binding</keyword>
<keyword id="KW-1035">Host cytoplasm</keyword>
<keyword id="KW-0378">Hydrolase</keyword>
<keyword id="KW-0489">Methyltransferase</keyword>
<keyword id="KW-0506">mRNA capping</keyword>
<keyword id="KW-0507">mRNA processing</keyword>
<keyword id="KW-0511">Multifunctional enzyme</keyword>
<keyword id="KW-0547">Nucleotide-binding</keyword>
<keyword id="KW-0548">Nucleotidyltransferase</keyword>
<keyword id="KW-1185">Reference proteome</keyword>
<keyword id="KW-0696">RNA-directed RNA polymerase</keyword>
<keyword id="KW-0949">S-adenosyl-L-methionine</keyword>
<keyword id="KW-0808">Transferase</keyword>
<keyword id="KW-0693">Viral RNA replication</keyword>
<keyword id="KW-0946">Virion</keyword>
<dbReference type="EC" id="2.7.7.48" evidence="3"/>
<dbReference type="EC" id="3.6.1.-" evidence="2"/>
<dbReference type="EC" id="2.7.7.88" evidence="2"/>
<dbReference type="EC" id="2.1.1.375" evidence="2"/>
<dbReference type="EMBL" id="M14887">
    <property type="protein sequence ID" value="AAA69579.1"/>
    <property type="status" value="ALT_FRAME"/>
    <property type="molecule type" value="Genomic_RNA"/>
</dbReference>
<dbReference type="EMBL" id="D00053">
    <property type="protein sequence ID" value="BAA00036.1"/>
    <property type="status" value="ALT_FRAME"/>
    <property type="molecule type" value="Genomic_RNA"/>
</dbReference>
<dbReference type="PIR" id="A24293">
    <property type="entry name" value="ZLNZSE"/>
</dbReference>
<dbReference type="SMR" id="P06829"/>
<dbReference type="Proteomes" id="UP000096504">
    <property type="component" value="Genome"/>
</dbReference>
<dbReference type="GO" id="GO:0030430">
    <property type="term" value="C:host cell cytoplasm"/>
    <property type="evidence" value="ECO:0007669"/>
    <property type="project" value="UniProtKB-SubCell"/>
</dbReference>
<dbReference type="GO" id="GO:0044423">
    <property type="term" value="C:virion component"/>
    <property type="evidence" value="ECO:0007669"/>
    <property type="project" value="UniProtKB-KW"/>
</dbReference>
<dbReference type="GO" id="GO:0005524">
    <property type="term" value="F:ATP binding"/>
    <property type="evidence" value="ECO:0007669"/>
    <property type="project" value="UniProtKB-KW"/>
</dbReference>
<dbReference type="GO" id="GO:0003924">
    <property type="term" value="F:GTPase activity"/>
    <property type="evidence" value="ECO:0007669"/>
    <property type="project" value="RHEA"/>
</dbReference>
<dbReference type="GO" id="GO:0004482">
    <property type="term" value="F:mRNA 5'-cap (guanine-N7-)-methyltransferase activity"/>
    <property type="evidence" value="ECO:0007669"/>
    <property type="project" value="InterPro"/>
</dbReference>
<dbReference type="GO" id="GO:0003968">
    <property type="term" value="F:RNA-directed RNA polymerase activity"/>
    <property type="evidence" value="ECO:0007669"/>
    <property type="project" value="UniProtKB-KW"/>
</dbReference>
<dbReference type="InterPro" id="IPR039736">
    <property type="entry name" value="L_poly_C"/>
</dbReference>
<dbReference type="InterPro" id="IPR026890">
    <property type="entry name" value="Mononeg_mRNAcap"/>
</dbReference>
<dbReference type="InterPro" id="IPR014023">
    <property type="entry name" value="Mononeg_RNA_pol_cat"/>
</dbReference>
<dbReference type="InterPro" id="IPR025786">
    <property type="entry name" value="Mononega_L_MeTrfase"/>
</dbReference>
<dbReference type="InterPro" id="IPR016269">
    <property type="entry name" value="RNA-dir_pol_paramyxovirus"/>
</dbReference>
<dbReference type="NCBIfam" id="TIGR04198">
    <property type="entry name" value="paramyx_RNAcap"/>
    <property type="match status" value="1"/>
</dbReference>
<dbReference type="Pfam" id="PF14318">
    <property type="entry name" value="Mononeg_mRNAcap"/>
    <property type="match status" value="1"/>
</dbReference>
<dbReference type="Pfam" id="PF00946">
    <property type="entry name" value="Mononeg_RNA_pol"/>
    <property type="match status" value="1"/>
</dbReference>
<dbReference type="PIRSF" id="PIRSF000830">
    <property type="entry name" value="RNA_pol_ParamyxoV"/>
    <property type="match status" value="1"/>
</dbReference>
<dbReference type="PROSITE" id="PS50526">
    <property type="entry name" value="RDRP_SSRNA_NEG_NONSEG"/>
    <property type="match status" value="1"/>
</dbReference>
<dbReference type="PROSITE" id="PS51590">
    <property type="entry name" value="SAM_MT_MNV_L"/>
    <property type="match status" value="1"/>
</dbReference>
<name>L_SENDE</name>
<evidence type="ECO:0000250" key="1"/>
<evidence type="ECO:0000250" key="2">
    <source>
        <dbReference type="UniProtKB" id="P03523"/>
    </source>
</evidence>
<evidence type="ECO:0000250" key="3">
    <source>
        <dbReference type="UniProtKB" id="P28887"/>
    </source>
</evidence>
<evidence type="ECO:0000255" key="4"/>
<evidence type="ECO:0000255" key="5">
    <source>
        <dbReference type="PROSITE-ProRule" id="PRU00539"/>
    </source>
</evidence>
<evidence type="ECO:0000255" key="6">
    <source>
        <dbReference type="PROSITE-ProRule" id="PRU00923"/>
    </source>
</evidence>
<evidence type="ECO:0000256" key="7">
    <source>
        <dbReference type="SAM" id="MobiDB-lite"/>
    </source>
</evidence>
<evidence type="ECO:0000305" key="8"/>
<comment type="function">
    <text evidence="2">RNA-directed RNA polymerase that catalyzes the transcription of viral mRNAs, their capping and polyadenylation. The template is composed of the viral RNA tightly encapsidated by the nucleoprotein (N). The viral polymerase binds to the genomic RNA at the 3' leader promoter, and transcribes subsequently all viral mRNAs with a decreasing efficiency. The first gene is the most transcribed, and the last the least transcribed. The viral phosphoprotein acts as a processivity factor. Capping is concomitant with initiation of mRNA transcription. Indeed, a GDP polyribonucleotidyl transferase (PRNTase) adds the cap structure when the nascent RNA chain length has reached few nucleotides. Ribose 2'-O methylation of viral mRNA cap precedes and facilitates subsequent guanine-N-7 methylation, both activities being carried by the viral polymerase. Polyadenylation of mRNAs occur by a stuttering mechanism at a slipery stop site present at the end viral genes. After finishing transcription of a mRNA, the polymerase can resume transcription of the downstream gene.</text>
</comment>
<comment type="function">
    <text evidence="2">RNA-directed RNA polymerase that catalyzes the replication of viral genomic RNA. The template is composed of the viral RNA tightly encapsidated by the nucleoprotein (N). The replicase mode is dependent on intracellular N protein concentration. In this mode, the polymerase replicates the whole viral genome without recognizing transcriptional signals, and the replicated genome is not caped or polyadenylated.</text>
</comment>
<comment type="catalytic activity">
    <reaction evidence="5">
        <text>RNA(n) + a ribonucleoside 5'-triphosphate = RNA(n+1) + diphosphate</text>
        <dbReference type="Rhea" id="RHEA:21248"/>
        <dbReference type="Rhea" id="RHEA-COMP:14527"/>
        <dbReference type="Rhea" id="RHEA-COMP:17342"/>
        <dbReference type="ChEBI" id="CHEBI:33019"/>
        <dbReference type="ChEBI" id="CHEBI:61557"/>
        <dbReference type="ChEBI" id="CHEBI:140395"/>
        <dbReference type="EC" id="2.7.7.48"/>
    </reaction>
</comment>
<comment type="catalytic activity">
    <reaction evidence="2">
        <text>a 5'-end (5'-triphosphoguanosine)-adenylyl-adenylyl-cytidylyl-adenosine in mRNA + 2 S-adenosyl-L-methionine = a 5'-end (N(7)-methyl 5'-triphosphoguanosine)-(2'-O-methyladenylyl)-adenylyl-cytidylyl-adenosine in mRNA + 2 S-adenosyl-L-homocysteine + H(+)</text>
        <dbReference type="Rhea" id="RHEA:65376"/>
        <dbReference type="Rhea" id="RHEA-COMP:16797"/>
        <dbReference type="Rhea" id="RHEA-COMP:16798"/>
        <dbReference type="ChEBI" id="CHEBI:15378"/>
        <dbReference type="ChEBI" id="CHEBI:57856"/>
        <dbReference type="ChEBI" id="CHEBI:59789"/>
        <dbReference type="ChEBI" id="CHEBI:156483"/>
        <dbReference type="ChEBI" id="CHEBI:156484"/>
        <dbReference type="EC" id="2.1.1.375"/>
    </reaction>
</comment>
<comment type="catalytic activity">
    <reaction evidence="2">
        <text>a 5'-end (5'-triphosphoguanosine)-adenylyl-adenylyl-cytidylyl-adenosine in mRNA + S-adenosyl-L-methionine = a 5'-end (5'-triphosphoguanosine)-(2'-O-methyladenylyl)-adenylyl-cytidylyl-adenosine in mRNA + S-adenosyl-L-homocysteine + H(+)</text>
        <dbReference type="Rhea" id="RHEA:65380"/>
        <dbReference type="Rhea" id="RHEA-COMP:16797"/>
        <dbReference type="Rhea" id="RHEA-COMP:16801"/>
        <dbReference type="ChEBI" id="CHEBI:15378"/>
        <dbReference type="ChEBI" id="CHEBI:57856"/>
        <dbReference type="ChEBI" id="CHEBI:59789"/>
        <dbReference type="ChEBI" id="CHEBI:156482"/>
        <dbReference type="ChEBI" id="CHEBI:156484"/>
    </reaction>
</comment>
<comment type="catalytic activity">
    <reaction evidence="3">
        <text>a 5'-end triphospho-adenylyl-adenylyl-cytidylyl-adenosine in mRNA + GDP + H(+) = a 5'-end (5'-triphosphoguanosine)-adenylyl-adenylyl-cytidylyl-adenosine in mRNA + diphosphate</text>
        <dbReference type="Rhea" id="RHEA:65436"/>
        <dbReference type="Rhea" id="RHEA-COMP:16797"/>
        <dbReference type="Rhea" id="RHEA-COMP:16799"/>
        <dbReference type="ChEBI" id="CHEBI:15378"/>
        <dbReference type="ChEBI" id="CHEBI:33019"/>
        <dbReference type="ChEBI" id="CHEBI:58189"/>
        <dbReference type="ChEBI" id="CHEBI:156484"/>
        <dbReference type="ChEBI" id="CHEBI:156503"/>
        <dbReference type="EC" id="2.7.7.88"/>
    </reaction>
</comment>
<comment type="catalytic activity">
    <reaction evidence="2">
        <text>a 5'-end (5'-triphosphoguanosine)-(2'-O-methyladenylyl)-adenylyl-cytidylyl-adenosine in mRNA + S-adenosyl-L-methionine = a 5'-end (N(7)-methyl 5'-triphosphoguanosine)-(2'-O-methyladenylyl)-adenylyl-cytidylyl-adenosine in mRNA + S-adenosyl-L-homocysteine</text>
        <dbReference type="Rhea" id="RHEA:65440"/>
        <dbReference type="Rhea" id="RHEA-COMP:16798"/>
        <dbReference type="Rhea" id="RHEA-COMP:16801"/>
        <dbReference type="ChEBI" id="CHEBI:57856"/>
        <dbReference type="ChEBI" id="CHEBI:59789"/>
        <dbReference type="ChEBI" id="CHEBI:156482"/>
        <dbReference type="ChEBI" id="CHEBI:156483"/>
    </reaction>
</comment>
<comment type="catalytic activity">
    <reaction evidence="3">
        <text>GTP + H2O = GDP + phosphate + H(+)</text>
        <dbReference type="Rhea" id="RHEA:19669"/>
        <dbReference type="ChEBI" id="CHEBI:15377"/>
        <dbReference type="ChEBI" id="CHEBI:15378"/>
        <dbReference type="ChEBI" id="CHEBI:37565"/>
        <dbReference type="ChEBI" id="CHEBI:43474"/>
        <dbReference type="ChEBI" id="CHEBI:58189"/>
    </reaction>
</comment>
<comment type="subunit">
    <text evidence="1">Homooligomer. Interacts with the P and C proteins. The L protein complexes with P protein to form the functional polymerase. C protein binding to L has an inhibitory effect (By similarity).</text>
</comment>
<comment type="subcellular location">
    <subcellularLocation>
        <location evidence="8">Virion</location>
    </subcellularLocation>
    <subcellularLocation>
        <location evidence="1">Host cytoplasm</location>
    </subcellularLocation>
</comment>
<comment type="domain">
    <text evidence="1">The N-terminal part (about 1-400) seems to be involved in binding to the P protein.</text>
</comment>
<comment type="miscellaneous">
    <text evidence="1">Least abundant structural protein (approximately 50 copies per virion). Unstable in the absence of P protein (By similarity).</text>
</comment>
<comment type="similarity">
    <text evidence="8">Belongs to the paramyxovirus L protein family.</text>
</comment>
<comment type="sequence caution" evidence="8">
    <conflict type="frameshift">
        <sequence resource="EMBL-CDS" id="AAA69579"/>
    </conflict>
</comment>
<comment type="sequence caution" evidence="8">
    <conflict type="frameshift">
        <sequence resource="EMBL-CDS" id="BAA00036"/>
    </conflict>
</comment>
<protein>
    <recommendedName>
        <fullName>RNA-directed RNA polymerase L</fullName>
        <shortName>Protein L</shortName>
    </recommendedName>
    <alternativeName>
        <fullName>Large structural protein</fullName>
    </alternativeName>
    <alternativeName>
        <fullName>Replicase</fullName>
    </alternativeName>
    <alternativeName>
        <fullName>Transcriptase</fullName>
    </alternativeName>
    <domain>
        <recommendedName>
            <fullName>RNA-directed RNA polymerase</fullName>
            <ecNumber evidence="3">2.7.7.48</ecNumber>
        </recommendedName>
    </domain>
    <domain>
        <recommendedName>
            <fullName evidence="2">GTP phosphohydrolase</fullName>
            <ecNumber evidence="2">3.6.1.-</ecNumber>
        </recommendedName>
    </domain>
    <domain>
        <recommendedName>
            <fullName evidence="8">GDP polyribonucleotidyltransferase</fullName>
            <ecNumber evidence="2">2.7.7.88</ecNumber>
        </recommendedName>
        <alternativeName>
            <fullName evidence="8">PRNTase</fullName>
        </alternativeName>
    </domain>
    <domain>
        <recommendedName>
            <fullName evidence="8">mRNA cap methyltransferase</fullName>
            <ecNumber evidence="2">2.1.1.375</ecNumber>
        </recommendedName>
        <alternativeName>
            <fullName evidence="2">mRNA (guanine-N(7)-)-methyltransferase</fullName>
            <shortName evidence="2">G-N7-MTase</shortName>
        </alternativeName>
        <alternativeName>
            <fullName evidence="2">mRNA (nucleoside-2'-O-)-methyltransferase</fullName>
            <shortName evidence="2">N1-2'-O-MTase</shortName>
        </alternativeName>
    </domain>
</protein>
<gene>
    <name type="primary">L</name>
</gene>
<sequence length="2228" mass="252890">MDGQESSQNPSDILYPECHLNSPIVRGKIAQLHVLLDVNQPYRLKDDSIINITKHKIRNGGLSPRQIKIRSLGKALQRTIKDLDRYTFEPYPTYSQELLRLDIPEICDKIRSVFAVSDRLTRELSSGFQDLWLNIFKQLGNIEGREGYDPLQDISTIPEITDKYSRNRWYRPFLTWFSIKYDMRWMQKTRPGGPIDTSNSHNLLECKSYTLVTYGDLVMILNKLTLTGYILTPELVLMYCDVVEGRWNMSAAGHLDKRSIGITSKGEELWELVDSLFSSLGEEIYNVIALLEPLSLALIQLNDPVIPLRGAFMRHVLTELQTVLTSRDVYTDAEADTIVESLLAIFHGTSIDEKAEIFSFFRTFGHPSLEAVTAADKVRAHMYAQKAIKLKTLYECHAVFCTIIINGYRERHGGQWPPCDFPDHVCLELRNAQGSNTAISYECAVDNYTSFIGFKFRKFIEPQLDEDLTIYMKDKALSPRKEAWDSVYPDSNLYYKAPESEETRRLIEVFINDENFNPEEIINYVESGDWLKDEKFNISYSLKEKEIKQEGRLFAKMTYKMRAVQVLAETLLAKGIGELFSENGMVKGEIDLLKRLTTLSVSGVPRTDSVYNNSKSSEKRNEGMKKKNSGGYWDEKKRSRHEFKATDSSTDGYETLSCFLTTDLKKYCLNWRFESTALFGQRCNEIFGFKTFFNWMHPILERCTIYVGDPYCPVADRMHRQLQDHADSGIFIHNPRGGIEGYCQKLWTLISISAIHLAAVRVGVRVSAMVQGDNQAIAVTSRVPVAQTYKQKKNHVYEETTKYFGALRHVMFDVGHELKLNETIISSKMFVYSKRIYYDGKILPQCLKALTRCVFWSETLVDENRSACSNISTSIAKAIENGYSPILGYCIALYKTCQQVCISLGMTINPTISPTVRDQYFKGKNWLRCAVLIPANVGGFNYMSTSRCFVRNIGDPAVAALADLKRFIRADLLDKQVLYRVMNQEPGDSSFLDWAPDPYSCNLPHSQSITTIIKNITARSVLQESPNPLLSGLFTETSGEEDLNLASFLMDRKVILPRVAHEILGNSLTGVREAIAGMLDTTKSLVRASVRKGGLSYGILRRLVNYDLLQYETLTRTLRKPVKDNIEYEYMCSVELAVGLRQKMWIHLTYGRPIHGLETPDPLELLRGTFIEGSEVCKLCRSEGADPIYTWFYLPDNIDLDTLTNGSPAIRIPYFGSATDERSEAQLGYVRNLSKPAKAAIRIAMVYTWAYGTDEISWMEAALIAQTRANLSLENLKLLTPVSTPTNLSHRLKDTATQMKFSSATLVRASRFITISNDNMALKEAGESKDTNLVYQQIMLTGLSLFEFNMRYKKGSLGKPLILHLHLNNGCCIMESPQEANIPPRSTLDLEITQENNKLIYDPDPLKDVDLELFSKVRDVVHTVDMTYWSDDEVIRATSICTAMTIADTMSQLDRDNLKEMIALVNDDDVNSLITEFMVIDVPLFCSTFGGILVNQFAYSLYGLNIRGREEIWGHVVRILKDTSHAVLKVLSNALSHPKIFKRFWNAGVVEPVYGPNLSNQDKILLALSVCEYSVDLFMHDWQGGVPLEIFICDNDPDVADMRRSSFLARHLAYLCSLAEISRDGPRLESMNSLERLESLKSYLELTFLDDPVLRYSQLTGLVIKVFPSTLTYIRKSSIKVLRTRGIGVPEVLEDWDPEADNALLDGIAAEIQQNIPLGHQTRAPFWGLRVSKSQVLRLRGYKEITRGEIGRSGVGLTLPFDGRYLSHQLRLFGINSTSCLKALELTYLLSPLVDKDKDRLYLGEGAGAMLSCYDATLGPCINYYNSGVYSCDVNGQRELNIYPAEVALVGKKLNNVTSLGQRVKVLFNGNPGSTWIGNDECEALIWNELQNSSIGLVHCDMEGGDHKDDQVVLHEHYSVIRIAYLVGDRDVVLISKIAPRLGTDWTRQLSLYLRYWDEVNLIVLKTSNPASTEMYLLSRHPKSDIIEDSKTVLASLLPLSKEDSIKIEKWILIEKAKAHEWVTRELREGSSSSGMLRPYHQALQTFGFEPNLYKLSRDFLSTMNIADTHNCMIAFNRVLKDTIFEWARITESDKRLKLTGKYDLYPVRDSGKLKTISRRLVLSWISLSMSTRLVTGSFPDQKFEARLQLGIVSLSSREIRNLRVITKTLLDRFEDIIHSITYRFLTKEIKILMKILGAVKMFGARQNEYTTVIDDGSLGDIEPYDSS</sequence>
<feature type="chain" id="PRO_0000142737" description="RNA-directed RNA polymerase L">
    <location>
        <begin position="1"/>
        <end position="2228"/>
    </location>
</feature>
<feature type="domain" description="RdRp catalytic" evidence="5">
    <location>
        <begin position="656"/>
        <end position="840"/>
    </location>
</feature>
<feature type="domain" description="Mononegavirus-type SAM-dependent 2'-O-MTase" evidence="6">
    <location>
        <begin position="1771"/>
        <end position="1978"/>
    </location>
</feature>
<feature type="region of interest" description="Oligomerization domain" evidence="1">
    <location>
        <begin position="1"/>
        <end position="174"/>
    </location>
</feature>
<feature type="region of interest" description="Disordered" evidence="7">
    <location>
        <begin position="610"/>
        <end position="633"/>
    </location>
</feature>
<feature type="region of interest" description="Involved in mRNA cap methylation" evidence="1">
    <location>
        <begin position="1756"/>
        <end position="2228"/>
    </location>
</feature>
<feature type="compositionally biased region" description="Basic and acidic residues" evidence="7">
    <location>
        <begin position="616"/>
        <end position="625"/>
    </location>
</feature>
<feature type="binding site" evidence="4">
    <location>
        <begin position="1801"/>
        <end position="1810"/>
    </location>
    <ligand>
        <name>ATP</name>
        <dbReference type="ChEBI" id="CHEBI:30616"/>
    </ligand>
</feature>
<reference key="1">
    <citation type="journal article" date="1986" name="Virology">
        <title>Sequence of the Sendai virus L gene: open reading frames upstream of the main coding region suggest that the gene may be polycistronic.</title>
        <authorList>
            <person name="Morgan E.M."/>
            <person name="Rakestraw K.M."/>
        </authorList>
    </citation>
    <scope>NUCLEOTIDE SEQUENCE [GENOMIC RNA]</scope>
</reference>
<organism>
    <name type="scientific">Sendai virus (strain Enders)</name>
    <name type="common">SeV</name>
    <dbReference type="NCBI Taxonomy" id="11194"/>
    <lineage>
        <taxon>Viruses</taxon>
        <taxon>Riboviria</taxon>
        <taxon>Orthornavirae</taxon>
        <taxon>Negarnaviricota</taxon>
        <taxon>Haploviricotina</taxon>
        <taxon>Monjiviricetes</taxon>
        <taxon>Mononegavirales</taxon>
        <taxon>Paramyxoviridae</taxon>
        <taxon>Feraresvirinae</taxon>
        <taxon>Respirovirus</taxon>
        <taxon>Respirovirus muris</taxon>
    </lineage>
</organism>